<organism>
    <name type="scientific">Listeria monocytogenes serotype 4b (strain F2365)</name>
    <dbReference type="NCBI Taxonomy" id="265669"/>
    <lineage>
        <taxon>Bacteria</taxon>
        <taxon>Bacillati</taxon>
        <taxon>Bacillota</taxon>
        <taxon>Bacilli</taxon>
        <taxon>Bacillales</taxon>
        <taxon>Listeriaceae</taxon>
        <taxon>Listeria</taxon>
    </lineage>
</organism>
<evidence type="ECO:0000250" key="1"/>
<evidence type="ECO:0000255" key="2">
    <source>
        <dbReference type="HAMAP-Rule" id="MF_01109"/>
    </source>
</evidence>
<comment type="function">
    <text evidence="1">Reversibly catalyzes the transfer of the carbamoyl group from carbamoyl phosphate (CP) to the N(epsilon) atom of ornithine (ORN) to produce L-citrulline.</text>
</comment>
<comment type="catalytic activity">
    <reaction evidence="2">
        <text>carbamoyl phosphate + L-ornithine = L-citrulline + phosphate + H(+)</text>
        <dbReference type="Rhea" id="RHEA:19513"/>
        <dbReference type="ChEBI" id="CHEBI:15378"/>
        <dbReference type="ChEBI" id="CHEBI:43474"/>
        <dbReference type="ChEBI" id="CHEBI:46911"/>
        <dbReference type="ChEBI" id="CHEBI:57743"/>
        <dbReference type="ChEBI" id="CHEBI:58228"/>
        <dbReference type="EC" id="2.1.3.3"/>
    </reaction>
</comment>
<comment type="pathway">
    <text evidence="2">Amino-acid biosynthesis; L-arginine biosynthesis; L-arginine from L-ornithine and carbamoyl phosphate: step 1/3.</text>
</comment>
<comment type="subcellular location">
    <subcellularLocation>
        <location evidence="2">Cytoplasm</location>
    </subcellularLocation>
</comment>
<comment type="similarity">
    <text evidence="2">Belongs to the aspartate/ornithine carbamoyltransferase superfamily. OTCase family.</text>
</comment>
<protein>
    <recommendedName>
        <fullName evidence="2">Ornithine carbamoyltransferase</fullName>
        <shortName evidence="2">OTCase</shortName>
        <ecNumber evidence="2">2.1.3.3</ecNumber>
    </recommendedName>
</protein>
<proteinExistence type="inferred from homology"/>
<dbReference type="EC" id="2.1.3.3" evidence="2"/>
<dbReference type="EMBL" id="AE017262">
    <property type="protein sequence ID" value="AAT04384.1"/>
    <property type="molecule type" value="Genomic_DNA"/>
</dbReference>
<dbReference type="RefSeq" id="WP_010958915.1">
    <property type="nucleotide sequence ID" value="NC_002973.6"/>
</dbReference>
<dbReference type="SMR" id="Q71Z80"/>
<dbReference type="KEGG" id="lmf:LMOf2365_1609"/>
<dbReference type="HOGENOM" id="CLU_043846_3_2_9"/>
<dbReference type="UniPathway" id="UPA00068">
    <property type="reaction ID" value="UER00112"/>
</dbReference>
<dbReference type="GO" id="GO:0005737">
    <property type="term" value="C:cytoplasm"/>
    <property type="evidence" value="ECO:0007669"/>
    <property type="project" value="UniProtKB-SubCell"/>
</dbReference>
<dbReference type="GO" id="GO:0016597">
    <property type="term" value="F:amino acid binding"/>
    <property type="evidence" value="ECO:0007669"/>
    <property type="project" value="InterPro"/>
</dbReference>
<dbReference type="GO" id="GO:0004585">
    <property type="term" value="F:ornithine carbamoyltransferase activity"/>
    <property type="evidence" value="ECO:0007669"/>
    <property type="project" value="UniProtKB-UniRule"/>
</dbReference>
<dbReference type="GO" id="GO:0042450">
    <property type="term" value="P:arginine biosynthetic process via ornithine"/>
    <property type="evidence" value="ECO:0007669"/>
    <property type="project" value="TreeGrafter"/>
</dbReference>
<dbReference type="GO" id="GO:0019240">
    <property type="term" value="P:citrulline biosynthetic process"/>
    <property type="evidence" value="ECO:0007669"/>
    <property type="project" value="TreeGrafter"/>
</dbReference>
<dbReference type="GO" id="GO:0006526">
    <property type="term" value="P:L-arginine biosynthetic process"/>
    <property type="evidence" value="ECO:0007669"/>
    <property type="project" value="UniProtKB-UniRule"/>
</dbReference>
<dbReference type="FunFam" id="3.40.50.1370:FF:000008">
    <property type="entry name" value="Ornithine carbamoyltransferase"/>
    <property type="match status" value="1"/>
</dbReference>
<dbReference type="FunFam" id="3.40.50.1370:FF:000016">
    <property type="entry name" value="Ornithine carbamoyltransferase"/>
    <property type="match status" value="1"/>
</dbReference>
<dbReference type="Gene3D" id="3.40.50.1370">
    <property type="entry name" value="Aspartate/ornithine carbamoyltransferase"/>
    <property type="match status" value="2"/>
</dbReference>
<dbReference type="HAMAP" id="MF_01109">
    <property type="entry name" value="OTCase"/>
    <property type="match status" value="1"/>
</dbReference>
<dbReference type="InterPro" id="IPR006132">
    <property type="entry name" value="Asp/Orn_carbamoyltranf_P-bd"/>
</dbReference>
<dbReference type="InterPro" id="IPR006130">
    <property type="entry name" value="Asp/Orn_carbamoylTrfase"/>
</dbReference>
<dbReference type="InterPro" id="IPR036901">
    <property type="entry name" value="Asp/Orn_carbamoylTrfase_sf"/>
</dbReference>
<dbReference type="InterPro" id="IPR006131">
    <property type="entry name" value="Asp_carbamoyltransf_Asp/Orn-bd"/>
</dbReference>
<dbReference type="InterPro" id="IPR002292">
    <property type="entry name" value="Orn/put_carbamltrans"/>
</dbReference>
<dbReference type="InterPro" id="IPR024904">
    <property type="entry name" value="OTCase_ArgI"/>
</dbReference>
<dbReference type="NCBIfam" id="TIGR00658">
    <property type="entry name" value="orni_carb_tr"/>
    <property type="match status" value="1"/>
</dbReference>
<dbReference type="NCBIfam" id="NF001986">
    <property type="entry name" value="PRK00779.1"/>
    <property type="match status" value="1"/>
</dbReference>
<dbReference type="PANTHER" id="PTHR45753">
    <property type="entry name" value="ORNITHINE CARBAMOYLTRANSFERASE, MITOCHONDRIAL"/>
    <property type="match status" value="1"/>
</dbReference>
<dbReference type="PANTHER" id="PTHR45753:SF3">
    <property type="entry name" value="ORNITHINE TRANSCARBAMYLASE, MITOCHONDRIAL"/>
    <property type="match status" value="1"/>
</dbReference>
<dbReference type="Pfam" id="PF00185">
    <property type="entry name" value="OTCace"/>
    <property type="match status" value="1"/>
</dbReference>
<dbReference type="Pfam" id="PF02729">
    <property type="entry name" value="OTCace_N"/>
    <property type="match status" value="1"/>
</dbReference>
<dbReference type="PRINTS" id="PR00100">
    <property type="entry name" value="AOTCASE"/>
</dbReference>
<dbReference type="PRINTS" id="PR00102">
    <property type="entry name" value="OTCASE"/>
</dbReference>
<dbReference type="SUPFAM" id="SSF53671">
    <property type="entry name" value="Aspartate/ornithine carbamoyltransferase"/>
    <property type="match status" value="1"/>
</dbReference>
<dbReference type="PROSITE" id="PS00097">
    <property type="entry name" value="CARBAMOYLTRANSFERASE"/>
    <property type="match status" value="1"/>
</dbReference>
<reference key="1">
    <citation type="journal article" date="2004" name="Nucleic Acids Res.">
        <title>Whole genome comparisons of serotype 4b and 1/2a strains of the food-borne pathogen Listeria monocytogenes reveal new insights into the core genome components of this species.</title>
        <authorList>
            <person name="Nelson K.E."/>
            <person name="Fouts D.E."/>
            <person name="Mongodin E.F."/>
            <person name="Ravel J."/>
            <person name="DeBoy R.T."/>
            <person name="Kolonay J.F."/>
            <person name="Rasko D.A."/>
            <person name="Angiuoli S.V."/>
            <person name="Gill S.R."/>
            <person name="Paulsen I.T."/>
            <person name="Peterson J.D."/>
            <person name="White O."/>
            <person name="Nelson W.C."/>
            <person name="Nierman W.C."/>
            <person name="Beanan M.J."/>
            <person name="Brinkac L.M."/>
            <person name="Daugherty S.C."/>
            <person name="Dodson R.J."/>
            <person name="Durkin A.S."/>
            <person name="Madupu R."/>
            <person name="Haft D.H."/>
            <person name="Selengut J."/>
            <person name="Van Aken S.E."/>
            <person name="Khouri H.M."/>
            <person name="Fedorova N."/>
            <person name="Forberger H.A."/>
            <person name="Tran B."/>
            <person name="Kathariou S."/>
            <person name="Wonderling L.D."/>
            <person name="Uhlich G.A."/>
            <person name="Bayles D.O."/>
            <person name="Luchansky J.B."/>
            <person name="Fraser C.M."/>
        </authorList>
    </citation>
    <scope>NUCLEOTIDE SEQUENCE [LARGE SCALE GENOMIC DNA]</scope>
    <source>
        <strain>F2365</strain>
    </source>
</reference>
<feature type="chain" id="PRO_0000112943" description="Ornithine carbamoyltransferase">
    <location>
        <begin position="1"/>
        <end position="316"/>
    </location>
</feature>
<feature type="binding site" evidence="2">
    <location>
        <begin position="59"/>
        <end position="62"/>
    </location>
    <ligand>
        <name>carbamoyl phosphate</name>
        <dbReference type="ChEBI" id="CHEBI:58228"/>
    </ligand>
</feature>
<feature type="binding site" evidence="2">
    <location>
        <position position="86"/>
    </location>
    <ligand>
        <name>carbamoyl phosphate</name>
        <dbReference type="ChEBI" id="CHEBI:58228"/>
    </ligand>
</feature>
<feature type="binding site" evidence="2">
    <location>
        <position position="110"/>
    </location>
    <ligand>
        <name>carbamoyl phosphate</name>
        <dbReference type="ChEBI" id="CHEBI:58228"/>
    </ligand>
</feature>
<feature type="binding site" evidence="2">
    <location>
        <begin position="137"/>
        <end position="140"/>
    </location>
    <ligand>
        <name>carbamoyl phosphate</name>
        <dbReference type="ChEBI" id="CHEBI:58228"/>
    </ligand>
</feature>
<feature type="binding site" evidence="2">
    <location>
        <position position="168"/>
    </location>
    <ligand>
        <name>L-ornithine</name>
        <dbReference type="ChEBI" id="CHEBI:46911"/>
    </ligand>
</feature>
<feature type="binding site" evidence="2">
    <location>
        <position position="232"/>
    </location>
    <ligand>
        <name>L-ornithine</name>
        <dbReference type="ChEBI" id="CHEBI:46911"/>
    </ligand>
</feature>
<feature type="binding site" evidence="2">
    <location>
        <begin position="236"/>
        <end position="237"/>
    </location>
    <ligand>
        <name>L-ornithine</name>
        <dbReference type="ChEBI" id="CHEBI:46911"/>
    </ligand>
</feature>
<feature type="binding site" evidence="2">
    <location>
        <begin position="273"/>
        <end position="274"/>
    </location>
    <ligand>
        <name>carbamoyl phosphate</name>
        <dbReference type="ChEBI" id="CHEBI:58228"/>
    </ligand>
</feature>
<feature type="binding site" evidence="2">
    <location>
        <position position="301"/>
    </location>
    <ligand>
        <name>carbamoyl phosphate</name>
        <dbReference type="ChEBI" id="CHEBI:58228"/>
    </ligand>
</feature>
<accession>Q71Z80</accession>
<sequence length="316" mass="34939">MTMYAKNNTAGKDMLSLLEWNKEELTDIIKLAVAMKTNPAHYSHILSGKILGMIFDKPSTRTRVSFEAGILQLGGQAIVMSSKELQIGRGEPIKDTAHVMSEYIDAIMIRTFSHEKVEELAYHAEIPIINGLTDLHHPCQALADLMTIYEWKDQLEGVKLAYIGDGNNVCHSLLLAGAMVGIDICLAMPKGYEVDETILAKAENLAKQSGGKIFVTEDPKLAVTDADFIYTDVWTSMGQEDENAKRLADFGEKYQVNAELVSGAKPDYHFLHCLPAHREEEVTAEIIDGNHSVIYQQAGNRLHAQKALLAAILEAK</sequence>
<keyword id="KW-0028">Amino-acid biosynthesis</keyword>
<keyword id="KW-0055">Arginine biosynthesis</keyword>
<keyword id="KW-0963">Cytoplasm</keyword>
<keyword id="KW-0808">Transferase</keyword>
<name>OTC_LISMF</name>
<gene>
    <name evidence="2" type="primary">argF</name>
    <name type="ordered locus">LMOf2365_1609</name>
</gene>